<comment type="function">
    <text evidence="1">Specifically catalyzes the cleavage of the D-lactyl ether substituent of MurNAc 6-phosphate, producing GlcNAc 6-phosphate and D-lactate.</text>
</comment>
<comment type="catalytic activity">
    <reaction evidence="1">
        <text>N-acetyl-D-muramate 6-phosphate + H2O = N-acetyl-D-glucosamine 6-phosphate + (R)-lactate</text>
        <dbReference type="Rhea" id="RHEA:26410"/>
        <dbReference type="ChEBI" id="CHEBI:15377"/>
        <dbReference type="ChEBI" id="CHEBI:16004"/>
        <dbReference type="ChEBI" id="CHEBI:57513"/>
        <dbReference type="ChEBI" id="CHEBI:58722"/>
        <dbReference type="EC" id="4.2.1.126"/>
    </reaction>
</comment>
<comment type="pathway">
    <text evidence="1">Amino-sugar metabolism; N-acetylmuramate degradation.</text>
</comment>
<comment type="subunit">
    <text evidence="1">Homodimer.</text>
</comment>
<comment type="miscellaneous">
    <text evidence="1">A lyase-type mechanism (elimination/hydration) is suggested for the cleavage of the lactyl ether bond of MurNAc 6-phosphate, with the formation of an alpha,beta-unsaturated aldehyde intermediate with (E)-stereochemistry, followed by the syn addition of water to give product.</text>
</comment>
<comment type="similarity">
    <text evidence="1">Belongs to the GCKR-like family. MurNAc-6-P etherase subfamily.</text>
</comment>
<gene>
    <name evidence="1" type="primary">murQ</name>
    <name type="ordered locus">BCQ_0909</name>
</gene>
<evidence type="ECO:0000255" key="1">
    <source>
        <dbReference type="HAMAP-Rule" id="MF_00068"/>
    </source>
</evidence>
<keyword id="KW-0119">Carbohydrate metabolism</keyword>
<keyword id="KW-0456">Lyase</keyword>
<proteinExistence type="inferred from homology"/>
<feature type="chain" id="PRO_1000118008" description="N-acetylmuramic acid 6-phosphate etherase">
    <location>
        <begin position="1"/>
        <end position="294"/>
    </location>
</feature>
<feature type="domain" description="SIS" evidence="1">
    <location>
        <begin position="54"/>
        <end position="217"/>
    </location>
</feature>
<feature type="active site" description="Proton donor" evidence="1">
    <location>
        <position position="82"/>
    </location>
</feature>
<feature type="active site" evidence="1">
    <location>
        <position position="113"/>
    </location>
</feature>
<dbReference type="EC" id="4.2.1.126" evidence="1"/>
<dbReference type="EMBL" id="CP000227">
    <property type="protein sequence ID" value="ACM11339.1"/>
    <property type="molecule type" value="Genomic_DNA"/>
</dbReference>
<dbReference type="SMR" id="B9IR64"/>
<dbReference type="KEGG" id="bcq:BCQ_0909"/>
<dbReference type="HOGENOM" id="CLU_049049_1_1_9"/>
<dbReference type="UniPathway" id="UPA00342"/>
<dbReference type="Proteomes" id="UP000000441">
    <property type="component" value="Chromosome"/>
</dbReference>
<dbReference type="GO" id="GO:0097367">
    <property type="term" value="F:carbohydrate derivative binding"/>
    <property type="evidence" value="ECO:0007669"/>
    <property type="project" value="InterPro"/>
</dbReference>
<dbReference type="GO" id="GO:0016835">
    <property type="term" value="F:carbon-oxygen lyase activity"/>
    <property type="evidence" value="ECO:0007669"/>
    <property type="project" value="UniProtKB-UniRule"/>
</dbReference>
<dbReference type="GO" id="GO:0016803">
    <property type="term" value="F:ether hydrolase activity"/>
    <property type="evidence" value="ECO:0007669"/>
    <property type="project" value="TreeGrafter"/>
</dbReference>
<dbReference type="GO" id="GO:0046348">
    <property type="term" value="P:amino sugar catabolic process"/>
    <property type="evidence" value="ECO:0007669"/>
    <property type="project" value="InterPro"/>
</dbReference>
<dbReference type="GO" id="GO:0097173">
    <property type="term" value="P:N-acetylmuramic acid catabolic process"/>
    <property type="evidence" value="ECO:0007669"/>
    <property type="project" value="UniProtKB-UniPathway"/>
</dbReference>
<dbReference type="GO" id="GO:0009254">
    <property type="term" value="P:peptidoglycan turnover"/>
    <property type="evidence" value="ECO:0007669"/>
    <property type="project" value="TreeGrafter"/>
</dbReference>
<dbReference type="CDD" id="cd05007">
    <property type="entry name" value="SIS_Etherase"/>
    <property type="match status" value="1"/>
</dbReference>
<dbReference type="FunFam" id="1.10.8.1080:FF:000001">
    <property type="entry name" value="N-acetylmuramic acid 6-phosphate etherase"/>
    <property type="match status" value="1"/>
</dbReference>
<dbReference type="FunFam" id="3.40.50.10490:FF:000014">
    <property type="entry name" value="N-acetylmuramic acid 6-phosphate etherase"/>
    <property type="match status" value="1"/>
</dbReference>
<dbReference type="Gene3D" id="1.10.8.1080">
    <property type="match status" value="1"/>
</dbReference>
<dbReference type="Gene3D" id="3.40.50.10490">
    <property type="entry name" value="Glucose-6-phosphate isomerase like protein, domain 1"/>
    <property type="match status" value="1"/>
</dbReference>
<dbReference type="HAMAP" id="MF_00068">
    <property type="entry name" value="MurQ"/>
    <property type="match status" value="1"/>
</dbReference>
<dbReference type="InterPro" id="IPR005488">
    <property type="entry name" value="Etherase_MurQ"/>
</dbReference>
<dbReference type="InterPro" id="IPR005486">
    <property type="entry name" value="Glucokinase_regulatory_CS"/>
</dbReference>
<dbReference type="InterPro" id="IPR040190">
    <property type="entry name" value="MURQ/GCKR"/>
</dbReference>
<dbReference type="InterPro" id="IPR001347">
    <property type="entry name" value="SIS_dom"/>
</dbReference>
<dbReference type="InterPro" id="IPR046348">
    <property type="entry name" value="SIS_dom_sf"/>
</dbReference>
<dbReference type="NCBIfam" id="TIGR00274">
    <property type="entry name" value="N-acetylmuramic acid 6-phosphate etherase"/>
    <property type="match status" value="1"/>
</dbReference>
<dbReference type="NCBIfam" id="NF003915">
    <property type="entry name" value="PRK05441.1"/>
    <property type="match status" value="1"/>
</dbReference>
<dbReference type="NCBIfam" id="NF009222">
    <property type="entry name" value="PRK12570.1"/>
    <property type="match status" value="1"/>
</dbReference>
<dbReference type="PANTHER" id="PTHR10088">
    <property type="entry name" value="GLUCOKINASE REGULATORY PROTEIN"/>
    <property type="match status" value="1"/>
</dbReference>
<dbReference type="PANTHER" id="PTHR10088:SF4">
    <property type="entry name" value="GLUCOKINASE REGULATORY PROTEIN"/>
    <property type="match status" value="1"/>
</dbReference>
<dbReference type="Pfam" id="PF22645">
    <property type="entry name" value="GKRP_SIS_N"/>
    <property type="match status" value="1"/>
</dbReference>
<dbReference type="SUPFAM" id="SSF53697">
    <property type="entry name" value="SIS domain"/>
    <property type="match status" value="1"/>
</dbReference>
<dbReference type="PROSITE" id="PS01272">
    <property type="entry name" value="GCKR"/>
    <property type="match status" value="1"/>
</dbReference>
<dbReference type="PROSITE" id="PS51464">
    <property type="entry name" value="SIS"/>
    <property type="match status" value="1"/>
</dbReference>
<reference key="1">
    <citation type="journal article" date="2009" name="J. Bacteriol.">
        <title>Complete genome sequence of the extremophilic Bacillus cereus strain Q1 with industrial applications.</title>
        <authorList>
            <person name="Xiong Z."/>
            <person name="Jiang Y."/>
            <person name="Qi D."/>
            <person name="Lu H."/>
            <person name="Yang F."/>
            <person name="Yang J."/>
            <person name="Chen L."/>
            <person name="Sun L."/>
            <person name="Xu X."/>
            <person name="Xue Y."/>
            <person name="Zhu Y."/>
            <person name="Jin Q."/>
        </authorList>
    </citation>
    <scope>NUCLEOTIDE SEQUENCE [LARGE SCALE GENOMIC DNA]</scope>
    <source>
        <strain>Q1</strain>
    </source>
</reference>
<protein>
    <recommendedName>
        <fullName evidence="1">N-acetylmuramic acid 6-phosphate etherase</fullName>
        <shortName evidence="1">MurNAc-6-P etherase</shortName>
        <ecNumber evidence="1">4.2.1.126</ecNumber>
    </recommendedName>
    <alternativeName>
        <fullName evidence="1">N-acetylmuramic acid 6-phosphate hydrolase</fullName>
    </alternativeName>
    <alternativeName>
        <fullName evidence="1">N-acetylmuramic acid 6-phosphate lyase</fullName>
    </alternativeName>
</protein>
<name>MURQ_BACCQ</name>
<organism>
    <name type="scientific">Bacillus cereus (strain Q1)</name>
    <dbReference type="NCBI Taxonomy" id="361100"/>
    <lineage>
        <taxon>Bacteria</taxon>
        <taxon>Bacillati</taxon>
        <taxon>Bacillota</taxon>
        <taxon>Bacilli</taxon>
        <taxon>Bacillales</taxon>
        <taxon>Bacillaceae</taxon>
        <taxon>Bacillus</taxon>
        <taxon>Bacillus cereus group</taxon>
    </lineage>
</organism>
<sequence length="294" mass="31918">MLENLSTEHRNEKTMNLDEMSIKEVLQSMNEEDRTVALAVENEIEQIEKVVQTVIKSFEEEGRLIYIGAGTSGRLGILDAVECPPTFGTDDKMVQGFIAGGLKAFTKAVEGAEDREELAEEDLKSIGLNEKDTVIGIAASGRTPYVIGGLKYANSVGASTASISCNKNAEISKYAKLNVEVETGAEILTGSTRLKAGTAQKLVLNMISTASMIGVGKVYKNLMVDVQSTNEKLIERSKRIIVEATGVSYEVAAEHYEKAERNVKAAIVMVLLQCEYGEALEKLKEAKGFVKKAL</sequence>
<accession>B9IR64</accession>